<evidence type="ECO:0000255" key="1">
    <source>
        <dbReference type="HAMAP-Rule" id="MF_00311"/>
    </source>
</evidence>
<gene>
    <name evidence="1" type="primary">atpE2</name>
    <name type="ordered locus">Mhun_1762</name>
</gene>
<keyword id="KW-0066">ATP synthesis</keyword>
<keyword id="KW-1003">Cell membrane</keyword>
<keyword id="KW-0375">Hydrogen ion transport</keyword>
<keyword id="KW-0406">Ion transport</keyword>
<keyword id="KW-0472">Membrane</keyword>
<keyword id="KW-1185">Reference proteome</keyword>
<keyword id="KW-0813">Transport</keyword>
<protein>
    <recommendedName>
        <fullName evidence="1">A-type ATP synthase subunit E 2</fullName>
    </recommendedName>
</protein>
<accession>Q2FL42</accession>
<organism>
    <name type="scientific">Methanospirillum hungatei JF-1 (strain ATCC 27890 / DSM 864 / NBRC 100397 / JF-1)</name>
    <dbReference type="NCBI Taxonomy" id="323259"/>
    <lineage>
        <taxon>Archaea</taxon>
        <taxon>Methanobacteriati</taxon>
        <taxon>Methanobacteriota</taxon>
        <taxon>Stenosarchaea group</taxon>
        <taxon>Methanomicrobia</taxon>
        <taxon>Methanomicrobiales</taxon>
        <taxon>Methanospirillaceae</taxon>
        <taxon>Methanospirillum</taxon>
    </lineage>
</organism>
<name>AATE2_METHJ</name>
<dbReference type="EMBL" id="CP000254">
    <property type="protein sequence ID" value="ABD41483.1"/>
    <property type="molecule type" value="Genomic_DNA"/>
</dbReference>
<dbReference type="SMR" id="Q2FL42"/>
<dbReference type="STRING" id="323259.Mhun_1762"/>
<dbReference type="EnsemblBacteria" id="ABD41483">
    <property type="protein sequence ID" value="ABD41483"/>
    <property type="gene ID" value="Mhun_1762"/>
</dbReference>
<dbReference type="KEGG" id="mhu:Mhun_1762"/>
<dbReference type="eggNOG" id="arCOG00869">
    <property type="taxonomic scope" value="Archaea"/>
</dbReference>
<dbReference type="HOGENOM" id="CLU_1399744_0_0_2"/>
<dbReference type="InParanoid" id="Q2FL42"/>
<dbReference type="Proteomes" id="UP000001941">
    <property type="component" value="Chromosome"/>
</dbReference>
<dbReference type="GO" id="GO:0005886">
    <property type="term" value="C:plasma membrane"/>
    <property type="evidence" value="ECO:0007669"/>
    <property type="project" value="UniProtKB-SubCell"/>
</dbReference>
<dbReference type="GO" id="GO:0033178">
    <property type="term" value="C:proton-transporting two-sector ATPase complex, catalytic domain"/>
    <property type="evidence" value="ECO:0007669"/>
    <property type="project" value="InterPro"/>
</dbReference>
<dbReference type="GO" id="GO:0005524">
    <property type="term" value="F:ATP binding"/>
    <property type="evidence" value="ECO:0007669"/>
    <property type="project" value="UniProtKB-UniRule"/>
</dbReference>
<dbReference type="GO" id="GO:0046933">
    <property type="term" value="F:proton-transporting ATP synthase activity, rotational mechanism"/>
    <property type="evidence" value="ECO:0007669"/>
    <property type="project" value="UniProtKB-UniRule"/>
</dbReference>
<dbReference type="GO" id="GO:0046961">
    <property type="term" value="F:proton-transporting ATPase activity, rotational mechanism"/>
    <property type="evidence" value="ECO:0007669"/>
    <property type="project" value="InterPro"/>
</dbReference>
<dbReference type="GO" id="GO:0042777">
    <property type="term" value="P:proton motive force-driven plasma membrane ATP synthesis"/>
    <property type="evidence" value="ECO:0007669"/>
    <property type="project" value="UniProtKB-UniRule"/>
</dbReference>
<dbReference type="Gene3D" id="3.30.2320.30">
    <property type="entry name" value="ATP synthase, E subunit, C-terminal"/>
    <property type="match status" value="1"/>
</dbReference>
<dbReference type="Gene3D" id="1.20.5.620">
    <property type="entry name" value="F1F0 ATP synthase subunit B, membrane domain"/>
    <property type="match status" value="1"/>
</dbReference>
<dbReference type="HAMAP" id="MF_00311">
    <property type="entry name" value="ATP_synth_E_arch"/>
    <property type="match status" value="1"/>
</dbReference>
<dbReference type="InterPro" id="IPR038495">
    <property type="entry name" value="ATPase_E_C"/>
</dbReference>
<dbReference type="InterPro" id="IPR002842">
    <property type="entry name" value="ATPase_V1_Esu"/>
</dbReference>
<dbReference type="Pfam" id="PF01991">
    <property type="entry name" value="vATP-synt_E"/>
    <property type="match status" value="1"/>
</dbReference>
<dbReference type="SUPFAM" id="SSF160527">
    <property type="entry name" value="V-type ATPase subunit E-like"/>
    <property type="match status" value="1"/>
</dbReference>
<comment type="function">
    <text evidence="1">Component of the A-type ATP synthase that produces ATP from ADP in the presence of a proton gradient across the membrane.</text>
</comment>
<comment type="subunit">
    <text evidence="1">Has multiple subunits with at least A(3), B(3), C, D, E, F, H, I and proteolipid K(x).</text>
</comment>
<comment type="subcellular location">
    <subcellularLocation>
        <location evidence="1">Cell membrane</location>
        <topology evidence="1">Peripheral membrane protein</topology>
    </subcellularLocation>
</comment>
<comment type="similarity">
    <text evidence="1">Belongs to the V-ATPase E subunit family.</text>
</comment>
<reference key="1">
    <citation type="journal article" date="2016" name="Stand. Genomic Sci.">
        <title>Complete genome sequence of Methanospirillum hungatei type strain JF1.</title>
        <authorList>
            <person name="Gunsalus R.P."/>
            <person name="Cook L.E."/>
            <person name="Crable B."/>
            <person name="Rohlin L."/>
            <person name="McDonald E."/>
            <person name="Mouttaki H."/>
            <person name="Sieber J.R."/>
            <person name="Poweleit N."/>
            <person name="Zhou H."/>
            <person name="Lapidus A.L."/>
            <person name="Daligault H.E."/>
            <person name="Land M."/>
            <person name="Gilna P."/>
            <person name="Ivanova N."/>
            <person name="Kyrpides N."/>
            <person name="Culley D.E."/>
            <person name="McInerney M.J."/>
        </authorList>
    </citation>
    <scope>NUCLEOTIDE SEQUENCE [LARGE SCALE GENOMIC DNA]</scope>
    <source>
        <strain>ATCC 27890 / DSM 864 / NBRC 100397 / JF-1</strain>
    </source>
</reference>
<sequence>MAYEDLIKSIESAAEEKKQEVLRNAEREVEAILREAETESSAIHAQYLEKAKRDLILENNRQKFLAKQEVKKRISAVRQKLIDDAFSRSKEKISGIRSDPSYPALYERLTREVISALAGEEIILHIDPADSKICSDVLKKTGIVCDIMQDITTIGGLSGTSADGRIRAYNTLESRMERIRDTSTLEIINLILGGPDG</sequence>
<feature type="chain" id="PRO_0000322533" description="A-type ATP synthase subunit E 2">
    <location>
        <begin position="1"/>
        <end position="197"/>
    </location>
</feature>
<proteinExistence type="inferred from homology"/>